<name>PFKA_LACDE</name>
<accession>P80019</accession>
<evidence type="ECO:0000255" key="1">
    <source>
        <dbReference type="HAMAP-Rule" id="MF_00339"/>
    </source>
</evidence>
<evidence type="ECO:0000269" key="2">
    <source>
    </source>
</evidence>
<evidence type="ECO:0000269" key="3">
    <source>
    </source>
</evidence>
<evidence type="ECO:0007829" key="4">
    <source>
        <dbReference type="PDB" id="1ZXX"/>
    </source>
</evidence>
<keyword id="KW-0002">3D-structure</keyword>
<keyword id="KW-0021">Allosteric enzyme</keyword>
<keyword id="KW-0067">ATP-binding</keyword>
<keyword id="KW-0963">Cytoplasm</keyword>
<keyword id="KW-0903">Direct protein sequencing</keyword>
<keyword id="KW-0324">Glycolysis</keyword>
<keyword id="KW-0418">Kinase</keyword>
<keyword id="KW-0460">Magnesium</keyword>
<keyword id="KW-0479">Metal-binding</keyword>
<keyword id="KW-0547">Nucleotide-binding</keyword>
<keyword id="KW-0808">Transferase</keyword>
<protein>
    <recommendedName>
        <fullName evidence="1">ATP-dependent 6-phosphofructokinase</fullName>
        <shortName evidence="1">ATP-PFK</shortName>
        <shortName evidence="1">Phosphofructokinase</shortName>
        <ecNumber evidence="1">2.7.1.11</ecNumber>
    </recommendedName>
    <alternativeName>
        <fullName evidence="1">Phosphohexokinase</fullName>
    </alternativeName>
</protein>
<dbReference type="EC" id="2.7.1.11" evidence="1"/>
<dbReference type="EMBL" id="X71403">
    <property type="protein sequence ID" value="CAA50526.1"/>
    <property type="molecule type" value="Genomic_DNA"/>
</dbReference>
<dbReference type="PIR" id="A48663">
    <property type="entry name" value="S35928"/>
</dbReference>
<dbReference type="RefSeq" id="WP_003619813.1">
    <property type="nucleotide sequence ID" value="NZ_RIST01000114.1"/>
</dbReference>
<dbReference type="PDB" id="1ZXX">
    <property type="method" value="X-ray"/>
    <property type="resolution" value="1.85 A"/>
    <property type="chains" value="A=1-319"/>
</dbReference>
<dbReference type="PDBsum" id="1ZXX"/>
<dbReference type="SMR" id="P80019"/>
<dbReference type="OMA" id="GYQGMIE"/>
<dbReference type="SABIO-RK" id="P80019"/>
<dbReference type="UniPathway" id="UPA00109">
    <property type="reaction ID" value="UER00182"/>
</dbReference>
<dbReference type="EvolutionaryTrace" id="P80019"/>
<dbReference type="GO" id="GO:0005945">
    <property type="term" value="C:6-phosphofructokinase complex"/>
    <property type="evidence" value="ECO:0007669"/>
    <property type="project" value="TreeGrafter"/>
</dbReference>
<dbReference type="GO" id="GO:0003872">
    <property type="term" value="F:6-phosphofructokinase activity"/>
    <property type="evidence" value="ECO:0007669"/>
    <property type="project" value="UniProtKB-UniRule"/>
</dbReference>
<dbReference type="GO" id="GO:0016208">
    <property type="term" value="F:AMP binding"/>
    <property type="evidence" value="ECO:0007669"/>
    <property type="project" value="TreeGrafter"/>
</dbReference>
<dbReference type="GO" id="GO:0005524">
    <property type="term" value="F:ATP binding"/>
    <property type="evidence" value="ECO:0007669"/>
    <property type="project" value="UniProtKB-KW"/>
</dbReference>
<dbReference type="GO" id="GO:0070095">
    <property type="term" value="F:fructose-6-phosphate binding"/>
    <property type="evidence" value="ECO:0007669"/>
    <property type="project" value="TreeGrafter"/>
</dbReference>
<dbReference type="GO" id="GO:0042802">
    <property type="term" value="F:identical protein binding"/>
    <property type="evidence" value="ECO:0007669"/>
    <property type="project" value="TreeGrafter"/>
</dbReference>
<dbReference type="GO" id="GO:0046872">
    <property type="term" value="F:metal ion binding"/>
    <property type="evidence" value="ECO:0007669"/>
    <property type="project" value="UniProtKB-KW"/>
</dbReference>
<dbReference type="GO" id="GO:0048029">
    <property type="term" value="F:monosaccharide binding"/>
    <property type="evidence" value="ECO:0007669"/>
    <property type="project" value="TreeGrafter"/>
</dbReference>
<dbReference type="GO" id="GO:0061621">
    <property type="term" value="P:canonical glycolysis"/>
    <property type="evidence" value="ECO:0007669"/>
    <property type="project" value="TreeGrafter"/>
</dbReference>
<dbReference type="GO" id="GO:0030388">
    <property type="term" value="P:fructose 1,6-bisphosphate metabolic process"/>
    <property type="evidence" value="ECO:0007669"/>
    <property type="project" value="TreeGrafter"/>
</dbReference>
<dbReference type="GO" id="GO:0006002">
    <property type="term" value="P:fructose 6-phosphate metabolic process"/>
    <property type="evidence" value="ECO:0007669"/>
    <property type="project" value="InterPro"/>
</dbReference>
<dbReference type="CDD" id="cd00763">
    <property type="entry name" value="Bacterial_PFK"/>
    <property type="match status" value="1"/>
</dbReference>
<dbReference type="FunFam" id="3.40.50.450:FF:000001">
    <property type="entry name" value="ATP-dependent 6-phosphofructokinase"/>
    <property type="match status" value="1"/>
</dbReference>
<dbReference type="FunFam" id="3.40.50.460:FF:000002">
    <property type="entry name" value="ATP-dependent 6-phosphofructokinase"/>
    <property type="match status" value="1"/>
</dbReference>
<dbReference type="Gene3D" id="3.40.50.450">
    <property type="match status" value="1"/>
</dbReference>
<dbReference type="Gene3D" id="3.40.50.460">
    <property type="entry name" value="Phosphofructokinase domain"/>
    <property type="match status" value="1"/>
</dbReference>
<dbReference type="HAMAP" id="MF_00339">
    <property type="entry name" value="Phosphofructokinase_I_B1"/>
    <property type="match status" value="1"/>
</dbReference>
<dbReference type="InterPro" id="IPR022953">
    <property type="entry name" value="ATP_PFK"/>
</dbReference>
<dbReference type="InterPro" id="IPR012003">
    <property type="entry name" value="ATP_PFK_prok-type"/>
</dbReference>
<dbReference type="InterPro" id="IPR012828">
    <property type="entry name" value="PFKA_ATP_prok"/>
</dbReference>
<dbReference type="InterPro" id="IPR015912">
    <property type="entry name" value="Phosphofructokinase_CS"/>
</dbReference>
<dbReference type="InterPro" id="IPR000023">
    <property type="entry name" value="Phosphofructokinase_dom"/>
</dbReference>
<dbReference type="InterPro" id="IPR035966">
    <property type="entry name" value="PKF_sf"/>
</dbReference>
<dbReference type="NCBIfam" id="TIGR02482">
    <property type="entry name" value="PFKA_ATP"/>
    <property type="match status" value="1"/>
</dbReference>
<dbReference type="NCBIfam" id="NF002872">
    <property type="entry name" value="PRK03202.1"/>
    <property type="match status" value="1"/>
</dbReference>
<dbReference type="PANTHER" id="PTHR13697:SF4">
    <property type="entry name" value="ATP-DEPENDENT 6-PHOSPHOFRUCTOKINASE"/>
    <property type="match status" value="1"/>
</dbReference>
<dbReference type="PANTHER" id="PTHR13697">
    <property type="entry name" value="PHOSPHOFRUCTOKINASE"/>
    <property type="match status" value="1"/>
</dbReference>
<dbReference type="Pfam" id="PF00365">
    <property type="entry name" value="PFK"/>
    <property type="match status" value="1"/>
</dbReference>
<dbReference type="PIRSF" id="PIRSF000532">
    <property type="entry name" value="ATP_PFK_prok"/>
    <property type="match status" value="1"/>
</dbReference>
<dbReference type="PRINTS" id="PR00476">
    <property type="entry name" value="PHFRCTKINASE"/>
</dbReference>
<dbReference type="SUPFAM" id="SSF53784">
    <property type="entry name" value="Phosphofructokinase"/>
    <property type="match status" value="1"/>
</dbReference>
<dbReference type="PROSITE" id="PS00433">
    <property type="entry name" value="PHOSPHOFRUCTOKINASE"/>
    <property type="match status" value="1"/>
</dbReference>
<comment type="function">
    <text evidence="1 3">Catalyzes the phosphorylation of D-fructose 6-phosphate to fructose 1,6-bisphosphate by ATP, the first committing step of glycolysis.</text>
</comment>
<comment type="catalytic activity">
    <reaction evidence="1">
        <text>beta-D-fructose 6-phosphate + ATP = beta-D-fructose 1,6-bisphosphate + ADP + H(+)</text>
        <dbReference type="Rhea" id="RHEA:16109"/>
        <dbReference type="ChEBI" id="CHEBI:15378"/>
        <dbReference type="ChEBI" id="CHEBI:30616"/>
        <dbReference type="ChEBI" id="CHEBI:32966"/>
        <dbReference type="ChEBI" id="CHEBI:57634"/>
        <dbReference type="ChEBI" id="CHEBI:456216"/>
        <dbReference type="EC" id="2.7.1.11"/>
    </reaction>
</comment>
<comment type="cofactor">
    <cofactor evidence="1">
        <name>Mg(2+)</name>
        <dbReference type="ChEBI" id="CHEBI:18420"/>
    </cofactor>
</comment>
<comment type="activity regulation">
    <text evidence="1 2 3">Allosterically activated by ADP and other diphosphonucleosides, and allosterically inhibited by phosphoenolpyruvate. The binding affinities for these effectors are decreased however, and therefore the allosteric effect becomes apparent only at high effector concentrations.</text>
</comment>
<comment type="biophysicochemical properties">
    <kinetics>
        <KM evidence="3">0.2 mM for ATP (at pH 8.2)</KM>
        <KM evidence="3">0.07 mM for ATP (at pH 6.0)</KM>
        <KM evidence="3">0.3 mM for fructose 6-phosphate (at pH 6.0 and 8.2)</KM>
        <Vmax evidence="3">90.0 umol/min/mg enzyme (at pH 8.2)</Vmax>
    </kinetics>
    <phDependence>
        <text evidence="3">Optimum pH is 8.2.</text>
    </phDependence>
</comment>
<comment type="pathway">
    <text evidence="1">Carbohydrate degradation; glycolysis; D-glyceraldehyde 3-phosphate and glycerone phosphate from D-glucose: step 3/4.</text>
</comment>
<comment type="subunit">
    <text evidence="1 3">Homotetramer.</text>
</comment>
<comment type="subcellular location">
    <subcellularLocation>
        <location evidence="1 3">Cytoplasm</location>
    </subcellularLocation>
</comment>
<comment type="similarity">
    <text evidence="1">Belongs to the phosphofructokinase type A (PFKA) family. ATP-dependent PFK group I subfamily. Prokaryotic clade 'B1' sub-subfamily.</text>
</comment>
<organism>
    <name type="scientific">Lactobacillus delbrueckii subsp. bulgaricus</name>
    <dbReference type="NCBI Taxonomy" id="1585"/>
    <lineage>
        <taxon>Bacteria</taxon>
        <taxon>Bacillati</taxon>
        <taxon>Bacillota</taxon>
        <taxon>Bacilli</taxon>
        <taxon>Lactobacillales</taxon>
        <taxon>Lactobacillaceae</taxon>
        <taxon>Lactobacillus</taxon>
    </lineage>
</organism>
<feature type="chain" id="PRO_0000111957" description="ATP-dependent 6-phosphofructokinase">
    <location>
        <begin position="1"/>
        <end position="319"/>
    </location>
</feature>
<feature type="active site" description="Proton acceptor" evidence="1">
    <location>
        <position position="127"/>
    </location>
</feature>
<feature type="binding site" evidence="1">
    <location>
        <position position="11"/>
    </location>
    <ligand>
        <name>ATP</name>
        <dbReference type="ChEBI" id="CHEBI:30616"/>
    </ligand>
</feature>
<feature type="binding site" evidence="1">
    <location>
        <begin position="21"/>
        <end position="25"/>
    </location>
    <ligand>
        <name>ADP</name>
        <dbReference type="ChEBI" id="CHEBI:456216"/>
        <note>allosteric activator; ligand shared between dimeric partners</note>
    </ligand>
</feature>
<feature type="binding site" evidence="1">
    <location>
        <begin position="72"/>
        <end position="73"/>
    </location>
    <ligand>
        <name>ATP</name>
        <dbReference type="ChEBI" id="CHEBI:30616"/>
    </ligand>
</feature>
<feature type="binding site" evidence="1">
    <location>
        <begin position="102"/>
        <end position="105"/>
    </location>
    <ligand>
        <name>ATP</name>
        <dbReference type="ChEBI" id="CHEBI:30616"/>
    </ligand>
</feature>
<feature type="binding site" evidence="1">
    <location>
        <position position="103"/>
    </location>
    <ligand>
        <name>Mg(2+)</name>
        <dbReference type="ChEBI" id="CHEBI:18420"/>
        <note>catalytic</note>
    </ligand>
</feature>
<feature type="binding site" description="in other chain" evidence="1">
    <location>
        <begin position="125"/>
        <end position="127"/>
    </location>
    <ligand>
        <name>substrate</name>
        <note>ligand shared between dimeric partners</note>
    </ligand>
</feature>
<feature type="binding site" description="in other chain" evidence="1">
    <location>
        <position position="154"/>
    </location>
    <ligand>
        <name>ADP</name>
        <dbReference type="ChEBI" id="CHEBI:456216"/>
        <note>allosteric activator; ligand shared between dimeric partners</note>
    </ligand>
</feature>
<feature type="binding site" evidence="1">
    <location>
        <position position="162"/>
    </location>
    <ligand>
        <name>substrate</name>
        <note>ligand shared between dimeric partners</note>
    </ligand>
</feature>
<feature type="binding site" description="in other chain" evidence="1">
    <location>
        <begin position="169"/>
        <end position="171"/>
    </location>
    <ligand>
        <name>substrate</name>
        <note>ligand shared between dimeric partners</note>
    </ligand>
</feature>
<feature type="binding site" description="in other chain" evidence="1">
    <location>
        <begin position="185"/>
        <end position="187"/>
    </location>
    <ligand>
        <name>ADP</name>
        <dbReference type="ChEBI" id="CHEBI:456216"/>
        <note>allosteric activator; ligand shared between dimeric partners</note>
    </ligand>
</feature>
<feature type="binding site" description="in other chain" evidence="1">
    <location>
        <begin position="213"/>
        <end position="215"/>
    </location>
    <ligand>
        <name>ADP</name>
        <dbReference type="ChEBI" id="CHEBI:456216"/>
        <note>allosteric activator; ligand shared between dimeric partners</note>
    </ligand>
</feature>
<feature type="binding site" description="in other chain" evidence="1">
    <location>
        <position position="222"/>
    </location>
    <ligand>
        <name>substrate</name>
        <note>ligand shared between dimeric partners</note>
    </ligand>
</feature>
<feature type="binding site" evidence="1">
    <location>
        <position position="243"/>
    </location>
    <ligand>
        <name>substrate</name>
        <note>ligand shared between dimeric partners</note>
    </ligand>
</feature>
<feature type="binding site" description="in other chain" evidence="1">
    <location>
        <begin position="249"/>
        <end position="252"/>
    </location>
    <ligand>
        <name>substrate</name>
        <note>ligand shared between dimeric partners</note>
    </ligand>
</feature>
<feature type="strand" evidence="4">
    <location>
        <begin position="3"/>
        <end position="8"/>
    </location>
</feature>
<feature type="helix" evidence="4">
    <location>
        <begin position="16"/>
        <end position="28"/>
    </location>
</feature>
<feature type="turn" evidence="4">
    <location>
        <begin position="29"/>
        <end position="31"/>
    </location>
</feature>
<feature type="strand" evidence="4">
    <location>
        <begin position="33"/>
        <end position="37"/>
    </location>
</feature>
<feature type="helix" evidence="4">
    <location>
        <begin position="40"/>
        <end position="46"/>
    </location>
</feature>
<feature type="strand" evidence="4">
    <location>
        <begin position="49"/>
        <end position="51"/>
    </location>
</feature>
<feature type="helix" evidence="4">
    <location>
        <begin position="54"/>
        <end position="57"/>
    </location>
</feature>
<feature type="helix" evidence="4">
    <location>
        <begin position="74"/>
        <end position="76"/>
    </location>
</feature>
<feature type="helix" evidence="4">
    <location>
        <begin position="79"/>
        <end position="91"/>
    </location>
</feature>
<feature type="strand" evidence="4">
    <location>
        <begin position="96"/>
        <end position="101"/>
    </location>
</feature>
<feature type="helix" evidence="4">
    <location>
        <begin position="103"/>
        <end position="114"/>
    </location>
</feature>
<feature type="strand" evidence="4">
    <location>
        <begin position="119"/>
        <end position="125"/>
    </location>
</feature>
<feature type="helix" evidence="4">
    <location>
        <begin position="139"/>
        <end position="159"/>
    </location>
</feature>
<feature type="strand" evidence="4">
    <location>
        <begin position="163"/>
        <end position="168"/>
    </location>
</feature>
<feature type="helix" evidence="4">
    <location>
        <begin position="175"/>
        <end position="183"/>
    </location>
</feature>
<feature type="strand" evidence="4">
    <location>
        <begin position="187"/>
        <end position="190"/>
    </location>
</feature>
<feature type="helix" evidence="4">
    <location>
        <begin position="198"/>
        <end position="210"/>
    </location>
</feature>
<feature type="strand" evidence="4">
    <location>
        <begin position="216"/>
        <end position="221"/>
    </location>
</feature>
<feature type="turn" evidence="4">
    <location>
        <begin position="222"/>
        <end position="224"/>
    </location>
</feature>
<feature type="helix" evidence="4">
    <location>
        <begin position="227"/>
        <end position="236"/>
    </location>
</feature>
<feature type="strand" evidence="4">
    <location>
        <begin position="242"/>
        <end position="246"/>
    </location>
</feature>
<feature type="helix" evidence="4">
    <location>
        <begin position="248"/>
        <end position="252"/>
    </location>
</feature>
<feature type="helix" evidence="4">
    <location>
        <begin position="258"/>
        <end position="276"/>
    </location>
</feature>
<feature type="strand" evidence="4">
    <location>
        <begin position="281"/>
        <end position="287"/>
    </location>
</feature>
<feature type="strand" evidence="4">
    <location>
        <begin position="290"/>
        <end position="295"/>
    </location>
</feature>
<feature type="helix" evidence="4">
    <location>
        <begin position="296"/>
        <end position="299"/>
    </location>
</feature>
<feature type="helix" evidence="4">
    <location>
        <begin position="309"/>
        <end position="317"/>
    </location>
</feature>
<proteinExistence type="evidence at protein level"/>
<reference key="1">
    <citation type="journal article" date="1993" name="J. Bacteriol.">
        <title>Cloning, sequencing, and expression in Escherichia coli of the gene coding for phosphofructokinase in Lactobacillus bulgaricus.</title>
        <authorList>
            <person name="Branny P."/>
            <person name="de la Torre F."/>
            <person name="Garel J.R."/>
        </authorList>
    </citation>
    <scope>NUCLEOTIDE SEQUENCE [GENOMIC DNA]</scope>
</reference>
<reference key="2">
    <citation type="journal article" date="1991" name="Eur. J. Biochem.">
        <title>Purification and properties of the phosphofructokinase from Lactobacillus bulgaricus. A non-allosteric analog of the enzyme from Escherichia coli.</title>
        <authorList>
            <person name="le Bras G."/>
            <person name="Deville-Bonne D."/>
            <person name="Garel J.R."/>
        </authorList>
    </citation>
    <scope>PROTEIN SEQUENCE OF 1-38</scope>
    <scope>FUNCTION</scope>
    <scope>SUBCELLULAR LOCATION</scope>
    <scope>SUBUNIT</scope>
    <scope>BIOPHYSICOCHEMICAL PROPERTIES</scope>
    <scope>ACTIVITY REGULATION</scope>
    <source>
        <strain>B107</strain>
    </source>
</reference>
<reference key="3">
    <citation type="journal article" date="2005" name="Biochemistry">
        <title>Kinetic and structural characterization of phosphofructokinase from Lactobacillus bulgaricus.</title>
        <authorList>
            <person name="Paricharttanakul N.M."/>
            <person name="Ye S."/>
            <person name="Menefee A.L."/>
            <person name="Javid-Majd F."/>
            <person name="Sacchettini J.C."/>
            <person name="Reinhart G.D."/>
        </authorList>
    </citation>
    <scope>X-RAY CRYSTALLOGRAPHY (1.85 ANGSTROMS)</scope>
    <scope>ACTIVITY REGULATION</scope>
    <source>
        <strain>B107</strain>
    </source>
</reference>
<sequence>MKRIGILTSGGDAPGMNAAVRAVTRVAIANGLEVFGIRYGFAGLVAGDIFPLESEDVAHLINVSGTFLYSARYPEFAEEEGQLAGIEQLKKHGIDAVVVIGGDGSYHGALQLTRHGFNSIGLPGTIDNDIPYTDATIGYDTACMTAMDAIDKIRDTASSHHRVFIVNVMGRNCGDIAMRVGVACGADAIVIPERPYDVEEIANRLKQAQESGKDHGLVVVAEGVMTADQFMAELKKYGDFDVRANVLGHMQRGGTPTVSDRVLASKLGSEAVHLLLEGKGGLAVGIENGKVTSHDILDLFDESHRGDYDLLKLNADLSR</sequence>
<gene>
    <name evidence="1" type="primary">pfkA</name>
</gene>